<organism>
    <name type="scientific">Bos taurus</name>
    <name type="common">Bovine</name>
    <dbReference type="NCBI Taxonomy" id="9913"/>
    <lineage>
        <taxon>Eukaryota</taxon>
        <taxon>Metazoa</taxon>
        <taxon>Chordata</taxon>
        <taxon>Craniata</taxon>
        <taxon>Vertebrata</taxon>
        <taxon>Euteleostomi</taxon>
        <taxon>Mammalia</taxon>
        <taxon>Eutheria</taxon>
        <taxon>Laurasiatheria</taxon>
        <taxon>Artiodactyla</taxon>
        <taxon>Ruminantia</taxon>
        <taxon>Pecora</taxon>
        <taxon>Bovidae</taxon>
        <taxon>Bovinae</taxon>
        <taxon>Bos</taxon>
    </lineage>
</organism>
<reference key="1">
    <citation type="journal article" date="2003" name="Mol. Reprod. Dev.">
        <title>Characterization of gene expression profiles in early bovine pregnancy using a custom cDNA microarray.</title>
        <authorList>
            <person name="Ishiwata H."/>
            <person name="Katsuma S."/>
            <person name="Kizaki K."/>
            <person name="Patel O.V."/>
            <person name="Nakano H."/>
            <person name="Takahashi T."/>
            <person name="Imai K."/>
            <person name="Hirasawa A."/>
            <person name="Shiojima S."/>
            <person name="Ikawa H."/>
            <person name="Suzuki Y."/>
            <person name="Tsujimoto G."/>
            <person name="Izaike Y."/>
            <person name="Todoroki J."/>
            <person name="Hashizume K."/>
        </authorList>
    </citation>
    <scope>NUCLEOTIDE SEQUENCE [MRNA]</scope>
</reference>
<reference key="2">
    <citation type="submission" date="2004-07" db="EMBL/GenBank/DDBJ databases">
        <title>Differentially expressed genes in bovine GV oocyte.</title>
        <authorList>
            <person name="Hwang K.C."/>
            <person name="Park S.Y."/>
            <person name="Cui X.S."/>
            <person name="Kim N.H."/>
        </authorList>
    </citation>
    <scope>NUCLEOTIDE SEQUENCE [MRNA]</scope>
</reference>
<reference key="3">
    <citation type="journal article" date="2005" name="BMC Genomics">
        <title>Characterization of 954 bovine full-CDS cDNA sequences.</title>
        <authorList>
            <person name="Harhay G.P."/>
            <person name="Sonstegard T.S."/>
            <person name="Keele J.W."/>
            <person name="Heaton M.P."/>
            <person name="Clawson M.L."/>
            <person name="Snelling W.M."/>
            <person name="Wiedmann R.T."/>
            <person name="Van Tassell C.P."/>
            <person name="Smith T.P.L."/>
        </authorList>
    </citation>
    <scope>NUCLEOTIDE SEQUENCE [LARGE SCALE MRNA]</scope>
</reference>
<reference key="4">
    <citation type="submission" date="2005-08" db="EMBL/GenBank/DDBJ databases">
        <authorList>
            <consortium name="NIH - Mammalian Gene Collection (MGC) project"/>
        </authorList>
    </citation>
    <scope>NUCLEOTIDE SEQUENCE [LARGE SCALE MRNA]</scope>
    <source>
        <strain>Crossbred X Angus</strain>
        <tissue>Ileum</tissue>
    </source>
</reference>
<reference key="5">
    <citation type="journal article" date="1996" name="J. Biol. Chem.">
        <title>Brain cytoplasmic and flagellar outer arm dyneins share a highly conserved Mr 8,000 light chain.</title>
        <authorList>
            <person name="King S.M."/>
            <person name="Barbarese E."/>
            <person name="Dillman J.F. III"/>
            <person name="Patel-King R.S."/>
            <person name="Carson J.H."/>
            <person name="Pfister K.K."/>
        </authorList>
    </citation>
    <scope>PROTEIN SEQUENCE OF 10-21 AND 37-43</scope>
    <scope>FUNCTION</scope>
    <scope>IDENTIFICATION IN THE CYTOPLASMIC DYNEIN 1 COMPLEX</scope>
    <scope>SUBUNIT</scope>
</reference>
<reference key="6">
    <citation type="journal article" date="2002" name="Protein Sci.">
        <title>Subunit organization in cytoplasmic dynein subcomplexes.</title>
        <authorList>
            <person name="King S.J."/>
            <person name="Bonilla M."/>
            <person name="Rodgers M.E."/>
            <person name="Schroer T.A."/>
        </authorList>
    </citation>
    <scope>FUNCTION</scope>
    <scope>SUBUNIT</scope>
    <scope>IDENTIFICATION IN THE CYTOPLASMIC DYNEIN 1 COMPLEX</scope>
</reference>
<reference key="7">
    <citation type="journal article" date="2010" name="Cell. Microbiol.">
        <title>Microtubule-dependent retrograde transport of bovine immunodeficiency virus.</title>
        <authorList>
            <person name="Su Y."/>
            <person name="Qiao W."/>
            <person name="Guo T."/>
            <person name="Tan J."/>
            <person name="Li Z."/>
            <person name="Chen Y."/>
            <person name="Li X."/>
            <person name="Li Y."/>
            <person name="Zhou J."/>
            <person name="Chen Q."/>
        </authorList>
    </citation>
    <scope>INTERACTION WITH BOVINE IMMUNODEFICIENCY VIRUS GAG PROTEIN (MICROBIAL INFECTION)</scope>
</reference>
<dbReference type="EMBL" id="AB099086">
    <property type="protein sequence ID" value="BAC56576.1"/>
    <property type="molecule type" value="mRNA"/>
</dbReference>
<dbReference type="EMBL" id="AY675078">
    <property type="protein sequence ID" value="AAT84371.1"/>
    <property type="molecule type" value="mRNA"/>
</dbReference>
<dbReference type="EMBL" id="BT021030">
    <property type="protein sequence ID" value="AAX09047.1"/>
    <property type="molecule type" value="mRNA"/>
</dbReference>
<dbReference type="EMBL" id="BC102872">
    <property type="protein sequence ID" value="AAI02873.1"/>
    <property type="molecule type" value="mRNA"/>
</dbReference>
<dbReference type="RefSeq" id="NP_001003901.1">
    <property type="nucleotide sequence ID" value="NM_001003901.1"/>
</dbReference>
<dbReference type="RefSeq" id="XP_010796262.1">
    <property type="nucleotide sequence ID" value="XM_010797960.2"/>
</dbReference>
<dbReference type="RefSeq" id="XP_010799037.1">
    <property type="nucleotide sequence ID" value="XM_010800735.1"/>
</dbReference>
<dbReference type="RefSeq" id="XP_010815015.1">
    <property type="nucleotide sequence ID" value="XM_010816713.1"/>
</dbReference>
<dbReference type="RefSeq" id="XP_015323821.1">
    <property type="nucleotide sequence ID" value="XM_015468335.1"/>
</dbReference>
<dbReference type="BMRB" id="P61285"/>
<dbReference type="EMDB" id="EMD-50664"/>
<dbReference type="SMR" id="P61285"/>
<dbReference type="FunCoup" id="P61285">
    <property type="interactions" value="3116"/>
</dbReference>
<dbReference type="STRING" id="9913.ENSBTAP00000056381"/>
<dbReference type="PaxDb" id="9913-ENSBTAP00000034172"/>
<dbReference type="PeptideAtlas" id="P61285"/>
<dbReference type="Ensembl" id="ENSBTAT00000034274.6">
    <property type="protein sequence ID" value="ENSBTAP00000034172.4"/>
    <property type="gene ID" value="ENSBTAG00000024605.6"/>
</dbReference>
<dbReference type="GeneID" id="404151"/>
<dbReference type="KEGG" id="bta:101902172"/>
<dbReference type="KEGG" id="bta:404151"/>
<dbReference type="KEGG" id="bta:784058"/>
<dbReference type="CTD" id="8655"/>
<dbReference type="VEuPathDB" id="HostDB:ENSBTAG00000024605"/>
<dbReference type="VEuPathDB" id="HostDB:ENSBTAG00000032034"/>
<dbReference type="eggNOG" id="KOG3430">
    <property type="taxonomic scope" value="Eukaryota"/>
</dbReference>
<dbReference type="GeneTree" id="ENSGT00390000000378"/>
<dbReference type="HOGENOM" id="CLU_070944_4_0_1"/>
<dbReference type="InParanoid" id="P61285"/>
<dbReference type="OMA" id="CANQAME"/>
<dbReference type="OrthoDB" id="10033309at2759"/>
<dbReference type="TreeFam" id="TF300264"/>
<dbReference type="Reactome" id="R-BTA-111446">
    <property type="pathway name" value="Activation of BIM and translocation to mitochondria"/>
</dbReference>
<dbReference type="Reactome" id="R-BTA-141444">
    <property type="pathway name" value="Amplification of signal from unattached kinetochores via a MAD2 inhibitory signal"/>
</dbReference>
<dbReference type="Reactome" id="R-BTA-1632852">
    <property type="pathway name" value="Macroautophagy"/>
</dbReference>
<dbReference type="Reactome" id="R-BTA-2132295">
    <property type="pathway name" value="MHC class II antigen presentation"/>
</dbReference>
<dbReference type="Reactome" id="R-BTA-2467813">
    <property type="pathway name" value="Separation of Sister Chromatids"/>
</dbReference>
<dbReference type="Reactome" id="R-BTA-2500257">
    <property type="pathway name" value="Resolution of Sister Chromatid Cohesion"/>
</dbReference>
<dbReference type="Reactome" id="R-BTA-2565942">
    <property type="pathway name" value="Regulation of PLK1 Activity at G2/M Transition"/>
</dbReference>
<dbReference type="Reactome" id="R-BTA-3371497">
    <property type="pathway name" value="HSP90 chaperone cycle for steroid hormone receptors (SHR) in the presence of ligand"/>
</dbReference>
<dbReference type="Reactome" id="R-BTA-380259">
    <property type="pathway name" value="Loss of Nlp from mitotic centrosomes"/>
</dbReference>
<dbReference type="Reactome" id="R-BTA-380270">
    <property type="pathway name" value="Recruitment of mitotic centrosome proteins and complexes"/>
</dbReference>
<dbReference type="Reactome" id="R-BTA-380284">
    <property type="pathway name" value="Loss of proteins required for interphase microtubule organization from the centrosome"/>
</dbReference>
<dbReference type="Reactome" id="R-BTA-380320">
    <property type="pathway name" value="Recruitment of NuMA to mitotic centrosomes"/>
</dbReference>
<dbReference type="Reactome" id="R-BTA-5620912">
    <property type="pathway name" value="Anchoring of the basal body to the plasma membrane"/>
</dbReference>
<dbReference type="Reactome" id="R-BTA-5620924">
    <property type="pathway name" value="Intraflagellar transport"/>
</dbReference>
<dbReference type="Reactome" id="R-BTA-5663220">
    <property type="pathway name" value="RHO GTPases Activate Formins"/>
</dbReference>
<dbReference type="Reactome" id="R-BTA-6798695">
    <property type="pathway name" value="Neutrophil degranulation"/>
</dbReference>
<dbReference type="Reactome" id="R-BTA-6807878">
    <property type="pathway name" value="COPI-mediated anterograde transport"/>
</dbReference>
<dbReference type="Reactome" id="R-BTA-6811436">
    <property type="pathway name" value="COPI-independent Golgi-to-ER retrograde traffic"/>
</dbReference>
<dbReference type="Reactome" id="R-BTA-68877">
    <property type="pathway name" value="Mitotic Prometaphase"/>
</dbReference>
<dbReference type="Reactome" id="R-BTA-8854518">
    <property type="pathway name" value="AURKA Activation by TPX2"/>
</dbReference>
<dbReference type="Reactome" id="R-BTA-9646399">
    <property type="pathway name" value="Aggrephagy"/>
</dbReference>
<dbReference type="Reactome" id="R-BTA-9648025">
    <property type="pathway name" value="EML4 and NUDC in mitotic spindle formation"/>
</dbReference>
<dbReference type="Proteomes" id="UP000009136">
    <property type="component" value="Chromosome 17"/>
</dbReference>
<dbReference type="Bgee" id="ENSBTAG00000024605">
    <property type="expression patterns" value="Expressed in oocyte and 104 other cell types or tissues"/>
</dbReference>
<dbReference type="GO" id="GO:0005813">
    <property type="term" value="C:centrosome"/>
    <property type="evidence" value="ECO:0007669"/>
    <property type="project" value="UniProtKB-SubCell"/>
</dbReference>
<dbReference type="GO" id="GO:0005929">
    <property type="term" value="C:cilium"/>
    <property type="evidence" value="ECO:0007669"/>
    <property type="project" value="GOC"/>
</dbReference>
<dbReference type="GO" id="GO:0005868">
    <property type="term" value="C:cytoplasmic dynein complex"/>
    <property type="evidence" value="ECO:0000314"/>
    <property type="project" value="UniProtKB"/>
</dbReference>
<dbReference type="GO" id="GO:0000776">
    <property type="term" value="C:kinetochore"/>
    <property type="evidence" value="ECO:0000250"/>
    <property type="project" value="UniProtKB"/>
</dbReference>
<dbReference type="GO" id="GO:0005874">
    <property type="term" value="C:microtubule"/>
    <property type="evidence" value="ECO:0007669"/>
    <property type="project" value="UniProtKB-KW"/>
</dbReference>
<dbReference type="GO" id="GO:0005739">
    <property type="term" value="C:mitochondrion"/>
    <property type="evidence" value="ECO:0007669"/>
    <property type="project" value="UniProtKB-SubCell"/>
</dbReference>
<dbReference type="GO" id="GO:0072686">
    <property type="term" value="C:mitotic spindle"/>
    <property type="evidence" value="ECO:0000250"/>
    <property type="project" value="UniProtKB"/>
</dbReference>
<dbReference type="GO" id="GO:0005634">
    <property type="term" value="C:nucleus"/>
    <property type="evidence" value="ECO:0007669"/>
    <property type="project" value="UniProtKB-SubCell"/>
</dbReference>
<dbReference type="GO" id="GO:0035861">
    <property type="term" value="C:site of double-strand break"/>
    <property type="evidence" value="ECO:0000250"/>
    <property type="project" value="UniProtKB"/>
</dbReference>
<dbReference type="GO" id="GO:0045505">
    <property type="term" value="F:dynein intermediate chain binding"/>
    <property type="evidence" value="ECO:0000318"/>
    <property type="project" value="GO_Central"/>
</dbReference>
<dbReference type="GO" id="GO:0004857">
    <property type="term" value="F:enzyme inhibitor activity"/>
    <property type="evidence" value="ECO:0000250"/>
    <property type="project" value="UniProtKB"/>
</dbReference>
<dbReference type="GO" id="GO:0006915">
    <property type="term" value="P:apoptotic process"/>
    <property type="evidence" value="ECO:0007669"/>
    <property type="project" value="UniProtKB-KW"/>
</dbReference>
<dbReference type="GO" id="GO:0006974">
    <property type="term" value="P:DNA damage response"/>
    <property type="evidence" value="ECO:0007669"/>
    <property type="project" value="UniProtKB-KW"/>
</dbReference>
<dbReference type="GO" id="GO:0035721">
    <property type="term" value="P:intraciliary retrograde transport"/>
    <property type="evidence" value="ECO:0000318"/>
    <property type="project" value="GO_Central"/>
</dbReference>
<dbReference type="GO" id="GO:0044458">
    <property type="term" value="P:motile cilium assembly"/>
    <property type="evidence" value="ECO:0000318"/>
    <property type="project" value="GO_Central"/>
</dbReference>
<dbReference type="GO" id="GO:0110027">
    <property type="term" value="P:negative regulation of DNA strand resection involved in replication fork processing"/>
    <property type="evidence" value="ECO:0000250"/>
    <property type="project" value="UniProtKB"/>
</dbReference>
<dbReference type="CDD" id="cd21452">
    <property type="entry name" value="DLC-like_DYNLL1_DYNLL2"/>
    <property type="match status" value="1"/>
</dbReference>
<dbReference type="FunFam" id="3.30.740.10:FF:000001">
    <property type="entry name" value="Dynein light chain"/>
    <property type="match status" value="1"/>
</dbReference>
<dbReference type="Gene3D" id="3.30.740.10">
    <property type="entry name" value="Protein Inhibitor Of Neuronal Nitric Oxide Synthase"/>
    <property type="match status" value="1"/>
</dbReference>
<dbReference type="InterPro" id="IPR037177">
    <property type="entry name" value="DLC_sf"/>
</dbReference>
<dbReference type="InterPro" id="IPR019763">
    <property type="entry name" value="Dynein_light_1/2_CS"/>
</dbReference>
<dbReference type="InterPro" id="IPR001372">
    <property type="entry name" value="Dynein_light_chain_typ-1/2"/>
</dbReference>
<dbReference type="PANTHER" id="PTHR11886">
    <property type="entry name" value="DYNEIN LIGHT CHAIN"/>
    <property type="match status" value="1"/>
</dbReference>
<dbReference type="PANTHER" id="PTHR11886:SF91">
    <property type="entry name" value="DYNEIN LIGHT CHAIN 1, CYTOPLASMIC"/>
    <property type="match status" value="1"/>
</dbReference>
<dbReference type="Pfam" id="PF01221">
    <property type="entry name" value="Dynein_light"/>
    <property type="match status" value="1"/>
</dbReference>
<dbReference type="SMART" id="SM01375">
    <property type="entry name" value="Dynein_light"/>
    <property type="match status" value="1"/>
</dbReference>
<dbReference type="SUPFAM" id="SSF54648">
    <property type="entry name" value="DLC"/>
    <property type="match status" value="1"/>
</dbReference>
<dbReference type="PROSITE" id="PS01239">
    <property type="entry name" value="DYNEIN_LIGHT_1"/>
    <property type="match status" value="1"/>
</dbReference>
<protein>
    <recommendedName>
        <fullName>Dynein light chain 1, cytoplasmic</fullName>
    </recommendedName>
    <alternativeName>
        <fullName>Dynein light chain LC8-type 1</fullName>
    </alternativeName>
</protein>
<accession>P61285</accession>
<accession>Q6B859</accession>
<sequence>MCDRKAVIKNADMSEEMQQDSVECATQALEKYNIEKDIAAHIKKEFDKKYNPTWHCIVGRNFGSYVTHETKHFIYFYLGQVAILLFKSG</sequence>
<feature type="chain" id="PRO_0000195124" description="Dynein light chain 1, cytoplasmic">
    <location>
        <begin position="1"/>
        <end position="89"/>
    </location>
</feature>
<feature type="region of interest" description="Interaction with ESR1" evidence="1">
    <location>
        <begin position="67"/>
        <end position="89"/>
    </location>
</feature>
<feature type="modified residue" description="N6-acetyllysine" evidence="2">
    <location>
        <position position="36"/>
    </location>
</feature>
<feature type="modified residue" description="Phosphoserine" evidence="2">
    <location>
        <position position="88"/>
    </location>
</feature>
<feature type="cross-link" description="Glycyl lysine isopeptide (Lys-Gly) (interchain with G-Cter in SUMO2)" evidence="2">
    <location>
        <position position="43"/>
    </location>
</feature>
<evidence type="ECO:0000250" key="1"/>
<evidence type="ECO:0000250" key="2">
    <source>
        <dbReference type="UniProtKB" id="P63167"/>
    </source>
</evidence>
<evidence type="ECO:0000250" key="3">
    <source>
        <dbReference type="UniProtKB" id="P63168"/>
    </source>
</evidence>
<evidence type="ECO:0000250" key="4">
    <source>
        <dbReference type="UniProtKB" id="P63170"/>
    </source>
</evidence>
<evidence type="ECO:0000269" key="5">
    <source>
    </source>
</evidence>
<evidence type="ECO:0000269" key="6">
    <source>
    </source>
</evidence>
<evidence type="ECO:0000269" key="7">
    <source>
    </source>
</evidence>
<evidence type="ECO:0000305" key="8"/>
<proteinExistence type="evidence at protein level"/>
<name>DYL1_BOVIN</name>
<comment type="function">
    <text evidence="2 4 5 7">Acts as one of several non-catalytic accessory components of the cytoplasmic dynein 1 complex that are thought to be involved in linking dynein to cargos and to adapter proteins that regulate dynein function (PubMed:11967380, PubMed:8702622). Cytoplasmic dynein 1 acts as a motor for the intracellular retrograde motility of vesicles and organelles along microtubules (PubMed:11967380, PubMed:8702622). May play a role in changing or maintaining the spatial distribution of cytoskeletal structures (PubMed:11967380, PubMed:8702622). In addition to its role in cytoskeleton and transport, acts as a protein-protein adapter, which inhibits and/or sequesters target proteins (By similarity). Involved in the response to DNA damage by acting as a key regulator of DNA end resection: when phosphorylated at Ser-88, recruited to DNA double-strand breaks (DSBs) by TP53BP1 and acts by disrupting MRE11 dimerization, thereby inhibiting DNA end resection (By similarity). In a subset of DSBs, DYNLL1 remains unphosphorylated and promotes the recruitment of the Shieldin complex (By similarity). Binds and inhibits the catalytic activity of neuronal nitric oxide synthase/NOS1 (By similarity). Promotes transactivation functions of ESR1 and plays a role in the nuclear localization of ESR1 (By similarity). Regulates apoptotic activities of BCL2L11 by sequestering it to microtubules (By similarity). Upon apoptotic stimuli the BCL2L11-DYNLL1 complex dissociates from cytoplasmic dynein and translocates to mitochondria and sequesters BCL2 thus neutralizing its antiapoptotic activity (By similarity).</text>
</comment>
<comment type="subunit">
    <text evidence="2 3 4 5 7">Homodimer. Monomer; the monomeric form is incapable of binding to target proteins (By similarity). The cytoplasmic dynein 1 complex consists of two catalytic heavy chains (HCs) and a number of non-catalytic subunits presented by intermediate chains (ICs), light intermediate chains (LICs) and light chains (LCs); the composition seems to vary in respect to the IC, LIC and LC composition (PubMed:11967380, PubMed:8702622). The heavy chain homodimer serves as a scaffold for the probable homodimeric assembly of the respective non-catalytic subunits (PubMed:11967380, PubMed:8702622). The ICs and LICs bind directly to the HC dimer and the LCs assemble on the IC dimer (PubMed:11967380, PubMed:8702622). Interacts with TXNDC17. Interacts with WWC1 and ESR1. The WWC1-DYNLL1 interaction is mandatory for the recruitment and transactivation functions of ESR1 or DYNLL1 to the target chromatin. Interacts with BCL2L11. Interacts with BCL2; the interaction is greatly enhanced in the nucleus and in mitochondria upon induction of apoptosis. Interacts with PAK1; the interaction requires dimeric DYNLL1. Interacts with MYZAP. Part of an astrin (SPAG5)-kinastrin (SKAP) complex containing KNSTRN, SPAG5, PLK1, DYNLL1 and SGO2. Interacts with ATMIN; this interaction inhibits ATMIN transcriptional activity and hence may play a role in a feedback loop whereby DYNLL1 inhibits transactivation of its own promoter by ATMIN. Interacts with NEK9 (not phosphorylated at 'Ser-944') (By similarity). Interacts with BICD2 (By similarity). Interacts with BCAS1 (By similarity). Interacts with Basson/BSN. Interacts with HDAC6. Interacts with TPPP. Interacts with AMBRA1 (via TQT motifs); tethering AMBRA1 to the cytoskeleton. Interacts with FAM83D/CHICA (via C-terminus). Interacts with HMMR, SPAG5/Astrin and KNSTRN/Kinastrin. Interacts with TLK2 (By similarity). Interacts with NOS1 (By similarity). Interacts with WWC1, WWC2 and WWC3. Interacts with MRE11; inhibiting MRE11 homodimerization and activity (By similarity).</text>
</comment>
<comment type="subunit">
    <text evidence="6">(Microbial infection) Interacts with bovine immunodeficiency virus Gag protein; this interaction is critical for intracellular microtubule-dependent viral genome transport.</text>
</comment>
<comment type="subcellular location">
    <subcellularLocation>
        <location evidence="2">Cytoplasm</location>
        <location evidence="2">Cytoskeleton</location>
        <location evidence="2">Microtubule organizing center</location>
        <location evidence="2">Centrosome</location>
    </subcellularLocation>
    <subcellularLocation>
        <location evidence="2">Chromosome</location>
    </subcellularLocation>
    <subcellularLocation>
        <location evidence="2">Cytoplasm</location>
        <location evidence="2">Cytoskeleton</location>
    </subcellularLocation>
    <subcellularLocation>
        <location evidence="2">Nucleus</location>
    </subcellularLocation>
    <subcellularLocation>
        <location evidence="2">Mitochondrion</location>
    </subcellularLocation>
    <text evidence="2">Upon induction of apoptosis translocates together with BCL2L11 to mitochondria. Recruited to DNA double-strand breaks (DSBs) by TP53BP1 when phosphorylated at Ser-88.</text>
</comment>
<comment type="PTM">
    <text evidence="2">Phosphorylation at Ser-88 promotes recruitment to DNA double-strand breaks (DSBs) by TP53BP1 and ability to inhibit MRE11.</text>
</comment>
<comment type="similarity">
    <text evidence="8">Belongs to the dynein light chain family.</text>
</comment>
<gene>
    <name type="primary">DYNLL1</name>
    <name type="synonym">DNCL1</name>
</gene>
<keyword id="KW-0007">Acetylation</keyword>
<keyword id="KW-0010">Activator</keyword>
<keyword id="KW-0053">Apoptosis</keyword>
<keyword id="KW-0158">Chromosome</keyword>
<keyword id="KW-0963">Cytoplasm</keyword>
<keyword id="KW-0206">Cytoskeleton</keyword>
<keyword id="KW-0903">Direct protein sequencing</keyword>
<keyword id="KW-0227">DNA damage</keyword>
<keyword id="KW-0243">Dynein</keyword>
<keyword id="KW-0945">Host-virus interaction</keyword>
<keyword id="KW-1017">Isopeptide bond</keyword>
<keyword id="KW-0493">Microtubule</keyword>
<keyword id="KW-0496">Mitochondrion</keyword>
<keyword id="KW-0505">Motor protein</keyword>
<keyword id="KW-0539">Nucleus</keyword>
<keyword id="KW-0597">Phosphoprotein</keyword>
<keyword id="KW-1185">Reference proteome</keyword>
<keyword id="KW-0804">Transcription</keyword>
<keyword id="KW-0805">Transcription regulation</keyword>
<keyword id="KW-0813">Transport</keyword>
<keyword id="KW-0832">Ubl conjugation</keyword>